<proteinExistence type="evidence at protein level"/>
<evidence type="ECO:0000250" key="1"/>
<evidence type="ECO:0000250" key="2">
    <source>
        <dbReference type="UniProtKB" id="A0A8C0NGY6"/>
    </source>
</evidence>
<evidence type="ECO:0000250" key="3">
    <source>
        <dbReference type="UniProtKB" id="H2LBU8"/>
    </source>
</evidence>
<evidence type="ECO:0000250" key="4">
    <source>
        <dbReference type="UniProtKB" id="P46937"/>
    </source>
</evidence>
<evidence type="ECO:0000255" key="5"/>
<evidence type="ECO:0000255" key="6">
    <source>
        <dbReference type="PROSITE-ProRule" id="PRU00224"/>
    </source>
</evidence>
<evidence type="ECO:0000256" key="7">
    <source>
        <dbReference type="SAM" id="MobiDB-lite"/>
    </source>
</evidence>
<evidence type="ECO:0000303" key="8">
    <source>
    </source>
</evidence>
<evidence type="ECO:0000305" key="9"/>
<organism>
    <name type="scientific">Gallus gallus</name>
    <name type="common">Chicken</name>
    <dbReference type="NCBI Taxonomy" id="9031"/>
    <lineage>
        <taxon>Eukaryota</taxon>
        <taxon>Metazoa</taxon>
        <taxon>Chordata</taxon>
        <taxon>Craniata</taxon>
        <taxon>Vertebrata</taxon>
        <taxon>Euteleostomi</taxon>
        <taxon>Archelosauria</taxon>
        <taxon>Archosauria</taxon>
        <taxon>Dinosauria</taxon>
        <taxon>Saurischia</taxon>
        <taxon>Theropoda</taxon>
        <taxon>Coelurosauria</taxon>
        <taxon>Aves</taxon>
        <taxon>Neognathae</taxon>
        <taxon>Galloanserae</taxon>
        <taxon>Galliformes</taxon>
        <taxon>Phasianidae</taxon>
        <taxon>Phasianinae</taxon>
        <taxon>Gallus</taxon>
    </lineage>
</organism>
<reference key="1">
    <citation type="journal article" date="1994" name="Oncogene">
        <title>Yes-associated protein (YAP65) is a proline-rich phosphoprotein that binds to the SH3 domain of the Yes proto-oncogene product.</title>
        <authorList>
            <person name="Sudol M."/>
        </authorList>
    </citation>
    <scope>NUCLEOTIDE SEQUENCE [MRNA]</scope>
    <source>
        <strain>White leghorn</strain>
    </source>
</reference>
<sequence>MDPGQPQPQQPPQAAQPPAPQQAAPQPPGAGSGAPGGAAQPPGAGPPPAGHQIVHVRGDSETDLEALFNAVMNPKGANVPHTLPMRLRKLPDSFFKPPEPKAHSRQASTDAGTAGALTPQHVRAHSSPASLQLGAVSPGTLTPSGVVTGPGAPSSQHLRQSSFEIPDDVPLPPGWEMAKTPSGQRYFLNHIDQTTTWQDPRKAMLSQMNVTAPTSPPVQQNLMNSASAMNQRISQSAPVKQPPPLAPQSPQGGVMGGSSSNQQQQMRLQQLQMEKERLRLKHQELLRQELALRSQLPTMEQDGGSQNPVSSPGMSQELRTMTTNSSDPFLNSGTYHSRDESTDSGLSMSSYSVPRTPDDFLNSVDEMDTGDSISQSNIPSHQNRFPDYLEAIPGTNVDLGTLEGDGMNIEGEELMPSLQEALSSDILNDMESVLAATKPDKESFLTWL</sequence>
<name>YAP1_CHICK</name>
<accession>P46936</accession>
<comment type="function">
    <text evidence="3 4">Transcriptional regulator which can act both as a coactivator and a corepressor and is the critical downstream regulatory target in the Hippo signaling pathway that plays a pivotal role in organ size control and tumor suppression by restricting proliferation and promoting apoptosis (By similarity). Plays a key role in tissue tension and 3D tissue shape by regulating cortical actomyosin network formation (By similarity).</text>
</comment>
<comment type="interaction">
    <interactant intactId="EBI-7804091">
        <id>P46936</id>
    </interactant>
    <interactant intactId="EBI-287091">
        <id>Q13625-2</id>
        <label>TP53BP2</label>
    </interactant>
    <organismsDiffer>true</organismsDiffer>
    <experiments>6</experiments>
</comment>
<comment type="subcellular location">
    <subcellularLocation>
        <location evidence="4">Cytoplasm</location>
    </subcellularLocation>
    <subcellularLocation>
        <location evidence="4">Nucleus</location>
    </subcellularLocation>
    <subcellularLocation>
        <location evidence="2">Cell junction</location>
        <location evidence="2">Tight junction</location>
    </subcellularLocation>
    <subcellularLocation>
        <location evidence="4">Cell membrane</location>
    </subcellularLocation>
    <text evidence="4">Both phosphorylation and cell density can regulate its subcellular localization. Phosphorylation sequesters it in the cytoplasm by inhibiting its translocation into the nucleus. At low density, predominantly nuclear and is translocated to the cytoplasm at high density.</text>
</comment>
<comment type="PTM">
    <text evidence="3">Phosphorylated by LATS1 and LATS2; leading to cytoplasmic translocation and inactivation.</text>
</comment>
<comment type="similarity">
    <text evidence="9">Belongs to the YAP1 family.</text>
</comment>
<feature type="chain" id="PRO_0000076073" description="Transcriptional coactivator YAP1">
    <location>
        <begin position="1"/>
        <end position="448"/>
    </location>
</feature>
<feature type="domain" description="WW" evidence="6">
    <location>
        <begin position="169"/>
        <end position="202"/>
    </location>
</feature>
<feature type="region of interest" description="Disordered" evidence="7">
    <location>
        <begin position="1"/>
        <end position="60"/>
    </location>
</feature>
<feature type="region of interest" description="Disordered" evidence="7">
    <location>
        <begin position="92"/>
        <end position="112"/>
    </location>
</feature>
<feature type="region of interest" description="Disordered" evidence="7">
    <location>
        <begin position="134"/>
        <end position="159"/>
    </location>
</feature>
<feature type="region of interest" description="Disordered" evidence="7">
    <location>
        <begin position="228"/>
        <end position="269"/>
    </location>
</feature>
<feature type="region of interest" description="Transactivation domain">
    <location>
        <begin position="251"/>
        <end position="448"/>
    </location>
</feature>
<feature type="region of interest" description="Disordered" evidence="7">
    <location>
        <begin position="293"/>
        <end position="351"/>
    </location>
</feature>
<feature type="coiled-coil region" evidence="1">
    <location>
        <begin position="85"/>
        <end position="99"/>
    </location>
</feature>
<feature type="coiled-coil region" evidence="5">
    <location>
        <begin position="258"/>
        <end position="303"/>
    </location>
</feature>
<feature type="compositionally biased region" description="Pro residues" evidence="7">
    <location>
        <begin position="1"/>
        <end position="28"/>
    </location>
</feature>
<feature type="compositionally biased region" description="Polar residues" evidence="7">
    <location>
        <begin position="228"/>
        <end position="238"/>
    </location>
</feature>
<feature type="compositionally biased region" description="Low complexity" evidence="7">
    <location>
        <begin position="257"/>
        <end position="269"/>
    </location>
</feature>
<feature type="compositionally biased region" description="Polar residues" evidence="7">
    <location>
        <begin position="295"/>
        <end position="335"/>
    </location>
</feature>
<gene>
    <name type="primary">YAP1</name>
    <name type="synonym">YAP65</name>
</gene>
<keyword id="KW-0010">Activator</keyword>
<keyword id="KW-0965">Cell junction</keyword>
<keyword id="KW-1003">Cell membrane</keyword>
<keyword id="KW-0175">Coiled coil</keyword>
<keyword id="KW-0963">Cytoplasm</keyword>
<keyword id="KW-0472">Membrane</keyword>
<keyword id="KW-0539">Nucleus</keyword>
<keyword id="KW-0656">Proto-oncogene</keyword>
<keyword id="KW-1185">Reference proteome</keyword>
<keyword id="KW-0678">Repressor</keyword>
<keyword id="KW-0796">Tight junction</keyword>
<keyword id="KW-0804">Transcription</keyword>
<keyword id="KW-0805">Transcription regulation</keyword>
<protein>
    <recommendedName>
        <fullName>Transcriptional coactivator YAP1</fullName>
        <shortName>Yes-associated protein 1</shortName>
    </recommendedName>
    <alternativeName>
        <fullName evidence="8">65 kDa Yes-associated protein</fullName>
        <shortName evidence="8">YAP65</shortName>
    </alternativeName>
    <alternativeName>
        <fullName>Protein yorkie homolog</fullName>
    </alternativeName>
</protein>
<dbReference type="EMBL" id="X76483">
    <property type="protein sequence ID" value="CAA54021.1"/>
    <property type="molecule type" value="mRNA"/>
</dbReference>
<dbReference type="PIR" id="I50730">
    <property type="entry name" value="I50730"/>
</dbReference>
<dbReference type="RefSeq" id="NP_990574.1">
    <property type="nucleotide sequence ID" value="NM_205243.1"/>
</dbReference>
<dbReference type="SMR" id="P46936"/>
<dbReference type="BioGRID" id="676433">
    <property type="interactions" value="1"/>
</dbReference>
<dbReference type="FunCoup" id="P46936">
    <property type="interactions" value="821"/>
</dbReference>
<dbReference type="IntAct" id="P46936">
    <property type="interactions" value="1"/>
</dbReference>
<dbReference type="MINT" id="P46936"/>
<dbReference type="STRING" id="9031.ENSGALP00000053936"/>
<dbReference type="PaxDb" id="9031-ENSGALP00000027721"/>
<dbReference type="GeneID" id="396171"/>
<dbReference type="KEGG" id="gga:396171"/>
<dbReference type="CTD" id="10413"/>
<dbReference type="VEuPathDB" id="HostDB:geneid_396171"/>
<dbReference type="eggNOG" id="KOG0940">
    <property type="taxonomic scope" value="Eukaryota"/>
</dbReference>
<dbReference type="InParanoid" id="P46936"/>
<dbReference type="OrthoDB" id="3045089at2759"/>
<dbReference type="PhylomeDB" id="P46936"/>
<dbReference type="PRO" id="PR:P46936"/>
<dbReference type="Proteomes" id="UP000000539">
    <property type="component" value="Unassembled WGS sequence"/>
</dbReference>
<dbReference type="GO" id="GO:0005923">
    <property type="term" value="C:bicellular tight junction"/>
    <property type="evidence" value="ECO:0007669"/>
    <property type="project" value="UniProtKB-SubCell"/>
</dbReference>
<dbReference type="GO" id="GO:0005911">
    <property type="term" value="C:cell-cell junction"/>
    <property type="evidence" value="ECO:0000250"/>
    <property type="project" value="UniProtKB"/>
</dbReference>
<dbReference type="GO" id="GO:0005737">
    <property type="term" value="C:cytoplasm"/>
    <property type="evidence" value="ECO:0000250"/>
    <property type="project" value="UniProtKB"/>
</dbReference>
<dbReference type="GO" id="GO:0005634">
    <property type="term" value="C:nucleus"/>
    <property type="evidence" value="ECO:0000250"/>
    <property type="project" value="UniProtKB"/>
</dbReference>
<dbReference type="GO" id="GO:0005886">
    <property type="term" value="C:plasma membrane"/>
    <property type="evidence" value="ECO:0007669"/>
    <property type="project" value="UniProtKB-SubCell"/>
</dbReference>
<dbReference type="GO" id="GO:0000976">
    <property type="term" value="F:transcription cis-regulatory region binding"/>
    <property type="evidence" value="ECO:0000250"/>
    <property type="project" value="UniProtKB"/>
</dbReference>
<dbReference type="GO" id="GO:0003713">
    <property type="term" value="F:transcription coactivator activity"/>
    <property type="evidence" value="ECO:0000318"/>
    <property type="project" value="GO_Central"/>
</dbReference>
<dbReference type="GO" id="GO:0003714">
    <property type="term" value="F:transcription corepressor activity"/>
    <property type="evidence" value="ECO:0000318"/>
    <property type="project" value="GO_Central"/>
</dbReference>
<dbReference type="GO" id="GO:0071480">
    <property type="term" value="P:cellular response to gamma radiation"/>
    <property type="evidence" value="ECO:0000250"/>
    <property type="project" value="UniProtKB"/>
</dbReference>
<dbReference type="GO" id="GO:0035329">
    <property type="term" value="P:hippo signaling"/>
    <property type="evidence" value="ECO:0000318"/>
    <property type="project" value="GO_Central"/>
</dbReference>
<dbReference type="GO" id="GO:0045944">
    <property type="term" value="P:positive regulation of transcription by RNA polymerase II"/>
    <property type="evidence" value="ECO:0000318"/>
    <property type="project" value="GO_Central"/>
</dbReference>
<dbReference type="GO" id="GO:0042770">
    <property type="term" value="P:signal transduction in response to DNA damage"/>
    <property type="evidence" value="ECO:0000250"/>
    <property type="project" value="UniProtKB"/>
</dbReference>
<dbReference type="CDD" id="cd00201">
    <property type="entry name" value="WW"/>
    <property type="match status" value="1"/>
</dbReference>
<dbReference type="FunFam" id="2.20.70.10:FF:000012">
    <property type="entry name" value="transcriptional coactivator YAP1 isoform X2"/>
    <property type="match status" value="1"/>
</dbReference>
<dbReference type="Gene3D" id="2.20.70.10">
    <property type="match status" value="1"/>
</dbReference>
<dbReference type="Gene3D" id="6.20.430.10">
    <property type="match status" value="1"/>
</dbReference>
<dbReference type="InterPro" id="IPR053819">
    <property type="entry name" value="TEADIR3_omega_loop"/>
</dbReference>
<dbReference type="InterPro" id="IPR001202">
    <property type="entry name" value="WW_dom"/>
</dbReference>
<dbReference type="InterPro" id="IPR036020">
    <property type="entry name" value="WW_dom_sf"/>
</dbReference>
<dbReference type="InterPro" id="IPR051583">
    <property type="entry name" value="YAP1"/>
</dbReference>
<dbReference type="PANTHER" id="PTHR17616:SF9">
    <property type="entry name" value="TRANSCRIPTIONAL COACTIVATOR YAP1"/>
    <property type="match status" value="1"/>
</dbReference>
<dbReference type="PANTHER" id="PTHR17616">
    <property type="entry name" value="YES-ASSOCIATED PROTEIN YAP1 FAMILY MEMBER"/>
    <property type="match status" value="1"/>
</dbReference>
<dbReference type="Pfam" id="PF15238">
    <property type="entry name" value="TEADIR3"/>
    <property type="match status" value="1"/>
</dbReference>
<dbReference type="Pfam" id="PF00397">
    <property type="entry name" value="WW"/>
    <property type="match status" value="1"/>
</dbReference>
<dbReference type="SMART" id="SM00456">
    <property type="entry name" value="WW"/>
    <property type="match status" value="1"/>
</dbReference>
<dbReference type="SUPFAM" id="SSF51045">
    <property type="entry name" value="WW domain"/>
    <property type="match status" value="1"/>
</dbReference>
<dbReference type="PROSITE" id="PS01159">
    <property type="entry name" value="WW_DOMAIN_1"/>
    <property type="match status" value="1"/>
</dbReference>
<dbReference type="PROSITE" id="PS50020">
    <property type="entry name" value="WW_DOMAIN_2"/>
    <property type="match status" value="1"/>
</dbReference>